<keyword id="KW-0328">Glycosyltransferase</keyword>
<keyword id="KW-0479">Metal-binding</keyword>
<keyword id="KW-0671">Queuosine biosynthesis</keyword>
<keyword id="KW-0808">Transferase</keyword>
<keyword id="KW-0819">tRNA processing</keyword>
<keyword id="KW-0862">Zinc</keyword>
<sequence>MKFELDTTDGRARRGRLVFDRGVVETPCFMPVGTYGTVKGMTPEEVEATGAQIILGNTFHLWLRPGQEIMKLHGDLHDFMQWKGPILTDSGGFQVFSLGDIRKITEQGVHFRNPINGDPIFLDPEKSMEIQYDLGSDIVMIFDECTPYPADWDYAKRSMEMSLRWAKRSRERFDSLGNKNALFGIIQGSVYEDLRDISVKGLVDIGFDGYAVGGLAVGEPKADMHRILEHVCPQIPADKPRYLMGVGKPEDLVEGVRRGIDMFDCVMPTRNARNGHLFVTDGVVKIRNAKYKSDTGPLDPECDCYTCRNYSRAYLHHLDRCNEILGARLNTIHNLRYYQRLMAGLRKAIEEGKLESFVTDFYQRQGREVPPLNVD</sequence>
<name>TGT_ECOSM</name>
<feature type="chain" id="PRO_1000198001" description="Queuine tRNA-ribosyltransferase">
    <location>
        <begin position="1"/>
        <end position="375"/>
    </location>
</feature>
<feature type="region of interest" description="RNA binding" evidence="1">
    <location>
        <begin position="245"/>
        <end position="251"/>
    </location>
</feature>
<feature type="region of interest" description="RNA binding; important for wobble base 34 recognition" evidence="1">
    <location>
        <begin position="269"/>
        <end position="273"/>
    </location>
</feature>
<feature type="active site" description="Proton acceptor" evidence="1">
    <location>
        <position position="89"/>
    </location>
</feature>
<feature type="active site" description="Nucleophile" evidence="1">
    <location>
        <position position="264"/>
    </location>
</feature>
<feature type="binding site" evidence="1">
    <location>
        <begin position="89"/>
        <end position="93"/>
    </location>
    <ligand>
        <name>substrate</name>
    </ligand>
</feature>
<feature type="binding site" evidence="1">
    <location>
        <position position="143"/>
    </location>
    <ligand>
        <name>substrate</name>
    </ligand>
</feature>
<feature type="binding site" evidence="1">
    <location>
        <position position="187"/>
    </location>
    <ligand>
        <name>substrate</name>
    </ligand>
</feature>
<feature type="binding site" evidence="1">
    <location>
        <position position="214"/>
    </location>
    <ligand>
        <name>substrate</name>
    </ligand>
</feature>
<feature type="binding site" evidence="1">
    <location>
        <position position="302"/>
    </location>
    <ligand>
        <name>Zn(2+)</name>
        <dbReference type="ChEBI" id="CHEBI:29105"/>
    </ligand>
</feature>
<feature type="binding site" evidence="1">
    <location>
        <position position="304"/>
    </location>
    <ligand>
        <name>Zn(2+)</name>
        <dbReference type="ChEBI" id="CHEBI:29105"/>
    </ligand>
</feature>
<feature type="binding site" evidence="1">
    <location>
        <position position="307"/>
    </location>
    <ligand>
        <name>Zn(2+)</name>
        <dbReference type="ChEBI" id="CHEBI:29105"/>
    </ligand>
</feature>
<feature type="binding site" evidence="1">
    <location>
        <position position="333"/>
    </location>
    <ligand>
        <name>Zn(2+)</name>
        <dbReference type="ChEBI" id="CHEBI:29105"/>
    </ligand>
</feature>
<proteinExistence type="inferred from homology"/>
<protein>
    <recommendedName>
        <fullName evidence="1">Queuine tRNA-ribosyltransferase</fullName>
        <ecNumber evidence="1">2.4.2.29</ecNumber>
    </recommendedName>
    <alternativeName>
        <fullName evidence="1">Guanine insertion enzyme</fullName>
    </alternativeName>
    <alternativeName>
        <fullName evidence="1">tRNA-guanine transglycosylase</fullName>
    </alternativeName>
</protein>
<dbReference type="EC" id="2.4.2.29" evidence="1"/>
<dbReference type="EMBL" id="CP000970">
    <property type="protein sequence ID" value="ACB16174.1"/>
    <property type="molecule type" value="Genomic_DNA"/>
</dbReference>
<dbReference type="RefSeq" id="WP_000667319.1">
    <property type="nucleotide sequence ID" value="NC_010498.1"/>
</dbReference>
<dbReference type="SMR" id="B1LJF4"/>
<dbReference type="GeneID" id="93777054"/>
<dbReference type="KEGG" id="ecm:EcSMS35_0438"/>
<dbReference type="HOGENOM" id="CLU_022060_0_1_6"/>
<dbReference type="UniPathway" id="UPA00392"/>
<dbReference type="Proteomes" id="UP000007011">
    <property type="component" value="Chromosome"/>
</dbReference>
<dbReference type="GO" id="GO:0005829">
    <property type="term" value="C:cytosol"/>
    <property type="evidence" value="ECO:0007669"/>
    <property type="project" value="TreeGrafter"/>
</dbReference>
<dbReference type="GO" id="GO:0046872">
    <property type="term" value="F:metal ion binding"/>
    <property type="evidence" value="ECO:0007669"/>
    <property type="project" value="UniProtKB-KW"/>
</dbReference>
<dbReference type="GO" id="GO:0008479">
    <property type="term" value="F:tRNA-guanosine(34) queuine transglycosylase activity"/>
    <property type="evidence" value="ECO:0007669"/>
    <property type="project" value="UniProtKB-UniRule"/>
</dbReference>
<dbReference type="GO" id="GO:0008616">
    <property type="term" value="P:queuosine biosynthetic process"/>
    <property type="evidence" value="ECO:0007669"/>
    <property type="project" value="UniProtKB-UniRule"/>
</dbReference>
<dbReference type="GO" id="GO:0002099">
    <property type="term" value="P:tRNA wobble guanine modification"/>
    <property type="evidence" value="ECO:0007669"/>
    <property type="project" value="TreeGrafter"/>
</dbReference>
<dbReference type="GO" id="GO:0101030">
    <property type="term" value="P:tRNA-guanine transglycosylation"/>
    <property type="evidence" value="ECO:0007669"/>
    <property type="project" value="InterPro"/>
</dbReference>
<dbReference type="FunFam" id="3.20.20.105:FF:000001">
    <property type="entry name" value="Queuine tRNA-ribosyltransferase"/>
    <property type="match status" value="1"/>
</dbReference>
<dbReference type="Gene3D" id="3.20.20.105">
    <property type="entry name" value="Queuine tRNA-ribosyltransferase-like"/>
    <property type="match status" value="1"/>
</dbReference>
<dbReference type="HAMAP" id="MF_00168">
    <property type="entry name" value="Q_tRNA_Tgt"/>
    <property type="match status" value="1"/>
</dbReference>
<dbReference type="InterPro" id="IPR050076">
    <property type="entry name" value="ArchSynthase1/Queuine_TRR"/>
</dbReference>
<dbReference type="InterPro" id="IPR004803">
    <property type="entry name" value="TGT"/>
</dbReference>
<dbReference type="InterPro" id="IPR036511">
    <property type="entry name" value="TGT-like_sf"/>
</dbReference>
<dbReference type="InterPro" id="IPR002616">
    <property type="entry name" value="tRNA_ribo_trans-like"/>
</dbReference>
<dbReference type="NCBIfam" id="TIGR00430">
    <property type="entry name" value="Q_tRNA_tgt"/>
    <property type="match status" value="1"/>
</dbReference>
<dbReference type="NCBIfam" id="TIGR00449">
    <property type="entry name" value="tgt_general"/>
    <property type="match status" value="1"/>
</dbReference>
<dbReference type="PANTHER" id="PTHR46499">
    <property type="entry name" value="QUEUINE TRNA-RIBOSYLTRANSFERASE"/>
    <property type="match status" value="1"/>
</dbReference>
<dbReference type="PANTHER" id="PTHR46499:SF1">
    <property type="entry name" value="QUEUINE TRNA-RIBOSYLTRANSFERASE"/>
    <property type="match status" value="1"/>
</dbReference>
<dbReference type="Pfam" id="PF01702">
    <property type="entry name" value="TGT"/>
    <property type="match status" value="1"/>
</dbReference>
<dbReference type="SUPFAM" id="SSF51713">
    <property type="entry name" value="tRNA-guanine transglycosylase"/>
    <property type="match status" value="1"/>
</dbReference>
<evidence type="ECO:0000255" key="1">
    <source>
        <dbReference type="HAMAP-Rule" id="MF_00168"/>
    </source>
</evidence>
<reference key="1">
    <citation type="journal article" date="2008" name="J. Bacteriol.">
        <title>Insights into the environmental resistance gene pool from the genome sequence of the multidrug-resistant environmental isolate Escherichia coli SMS-3-5.</title>
        <authorList>
            <person name="Fricke W.F."/>
            <person name="Wright M.S."/>
            <person name="Lindell A.H."/>
            <person name="Harkins D.M."/>
            <person name="Baker-Austin C."/>
            <person name="Ravel J."/>
            <person name="Stepanauskas R."/>
        </authorList>
    </citation>
    <scope>NUCLEOTIDE SEQUENCE [LARGE SCALE GENOMIC DNA]</scope>
    <source>
        <strain>SMS-3-5 / SECEC</strain>
    </source>
</reference>
<gene>
    <name evidence="1" type="primary">tgt</name>
    <name type="ordered locus">EcSMS35_0438</name>
</gene>
<comment type="function">
    <text evidence="1">Catalyzes the base-exchange of a guanine (G) residue with the queuine precursor 7-aminomethyl-7-deazaguanine (PreQ1) at position 34 (anticodon wobble position) in tRNAs with GU(N) anticodons (tRNA-Asp, -Asn, -His and -Tyr). Catalysis occurs through a double-displacement mechanism. The nucleophile active site attacks the C1' of nucleotide 34 to detach the guanine base from the RNA, forming a covalent enzyme-RNA intermediate. The proton acceptor active site deprotonates the incoming PreQ1, allowing a nucleophilic attack on the C1' of the ribose to form the product. After dissociation, two additional enzymatic reactions on the tRNA convert PreQ1 to queuine (Q), resulting in the hypermodified nucleoside queuosine (7-(((4,5-cis-dihydroxy-2-cyclopenten-1-yl)amino)methyl)-7-deazaguanosine).</text>
</comment>
<comment type="catalytic activity">
    <reaction evidence="1">
        <text>7-aminomethyl-7-carbaguanine + guanosine(34) in tRNA = 7-aminomethyl-7-carbaguanosine(34) in tRNA + guanine</text>
        <dbReference type="Rhea" id="RHEA:24104"/>
        <dbReference type="Rhea" id="RHEA-COMP:10341"/>
        <dbReference type="Rhea" id="RHEA-COMP:10342"/>
        <dbReference type="ChEBI" id="CHEBI:16235"/>
        <dbReference type="ChEBI" id="CHEBI:58703"/>
        <dbReference type="ChEBI" id="CHEBI:74269"/>
        <dbReference type="ChEBI" id="CHEBI:82833"/>
        <dbReference type="EC" id="2.4.2.29"/>
    </reaction>
</comment>
<comment type="cofactor">
    <cofactor evidence="1">
        <name>Zn(2+)</name>
        <dbReference type="ChEBI" id="CHEBI:29105"/>
    </cofactor>
    <text evidence="1">Binds 1 zinc ion per subunit.</text>
</comment>
<comment type="pathway">
    <text evidence="1">tRNA modification; tRNA-queuosine biosynthesis.</text>
</comment>
<comment type="subunit">
    <text evidence="1">Homodimer. Within each dimer, one monomer is responsible for RNA recognition and catalysis, while the other monomer binds to the replacement base PreQ1.</text>
</comment>
<comment type="similarity">
    <text evidence="1">Belongs to the queuine tRNA-ribosyltransferase family.</text>
</comment>
<accession>B1LJF4</accession>
<organism>
    <name type="scientific">Escherichia coli (strain SMS-3-5 / SECEC)</name>
    <dbReference type="NCBI Taxonomy" id="439855"/>
    <lineage>
        <taxon>Bacteria</taxon>
        <taxon>Pseudomonadati</taxon>
        <taxon>Pseudomonadota</taxon>
        <taxon>Gammaproteobacteria</taxon>
        <taxon>Enterobacterales</taxon>
        <taxon>Enterobacteriaceae</taxon>
        <taxon>Escherichia</taxon>
    </lineage>
</organism>